<dbReference type="EMBL" id="CP001173">
    <property type="protein sequence ID" value="ACI28002.1"/>
    <property type="molecule type" value="Genomic_DNA"/>
</dbReference>
<dbReference type="RefSeq" id="WP_000245805.1">
    <property type="nucleotide sequence ID" value="NC_011333.1"/>
</dbReference>
<dbReference type="SMR" id="B5Z8V3"/>
<dbReference type="GeneID" id="93237564"/>
<dbReference type="KEGG" id="hpg:HPG27_1254"/>
<dbReference type="HOGENOM" id="CLU_098428_0_2_7"/>
<dbReference type="Proteomes" id="UP000001735">
    <property type="component" value="Chromosome"/>
</dbReference>
<dbReference type="GO" id="GO:1990904">
    <property type="term" value="C:ribonucleoprotein complex"/>
    <property type="evidence" value="ECO:0007669"/>
    <property type="project" value="UniProtKB-KW"/>
</dbReference>
<dbReference type="GO" id="GO:0005840">
    <property type="term" value="C:ribosome"/>
    <property type="evidence" value="ECO:0007669"/>
    <property type="project" value="UniProtKB-KW"/>
</dbReference>
<dbReference type="GO" id="GO:0019843">
    <property type="term" value="F:rRNA binding"/>
    <property type="evidence" value="ECO:0007669"/>
    <property type="project" value="UniProtKB-UniRule"/>
</dbReference>
<dbReference type="GO" id="GO:0003735">
    <property type="term" value="F:structural constituent of ribosome"/>
    <property type="evidence" value="ECO:0007669"/>
    <property type="project" value="InterPro"/>
</dbReference>
<dbReference type="GO" id="GO:0006412">
    <property type="term" value="P:translation"/>
    <property type="evidence" value="ECO:0007669"/>
    <property type="project" value="UniProtKB-UniRule"/>
</dbReference>
<dbReference type="FunFam" id="3.30.1370.30:FF:000002">
    <property type="entry name" value="30S ribosomal protein S8"/>
    <property type="match status" value="1"/>
</dbReference>
<dbReference type="FunFam" id="3.30.1490.10:FF:000001">
    <property type="entry name" value="30S ribosomal protein S8"/>
    <property type="match status" value="1"/>
</dbReference>
<dbReference type="Gene3D" id="3.30.1370.30">
    <property type="match status" value="1"/>
</dbReference>
<dbReference type="Gene3D" id="3.30.1490.10">
    <property type="match status" value="1"/>
</dbReference>
<dbReference type="HAMAP" id="MF_01302_B">
    <property type="entry name" value="Ribosomal_uS8_B"/>
    <property type="match status" value="1"/>
</dbReference>
<dbReference type="InterPro" id="IPR000630">
    <property type="entry name" value="Ribosomal_uS8"/>
</dbReference>
<dbReference type="InterPro" id="IPR047863">
    <property type="entry name" value="Ribosomal_uS8_CS"/>
</dbReference>
<dbReference type="InterPro" id="IPR035987">
    <property type="entry name" value="Ribosomal_uS8_sf"/>
</dbReference>
<dbReference type="NCBIfam" id="NF001109">
    <property type="entry name" value="PRK00136.1"/>
    <property type="match status" value="1"/>
</dbReference>
<dbReference type="PANTHER" id="PTHR11758">
    <property type="entry name" value="40S RIBOSOMAL PROTEIN S15A"/>
    <property type="match status" value="1"/>
</dbReference>
<dbReference type="Pfam" id="PF00410">
    <property type="entry name" value="Ribosomal_S8"/>
    <property type="match status" value="1"/>
</dbReference>
<dbReference type="SUPFAM" id="SSF56047">
    <property type="entry name" value="Ribosomal protein S8"/>
    <property type="match status" value="1"/>
</dbReference>
<dbReference type="PROSITE" id="PS00053">
    <property type="entry name" value="RIBOSOMAL_S8"/>
    <property type="match status" value="1"/>
</dbReference>
<protein>
    <recommendedName>
        <fullName evidence="1">Small ribosomal subunit protein uS8</fullName>
    </recommendedName>
    <alternativeName>
        <fullName evidence="2">30S ribosomal protein S8</fullName>
    </alternativeName>
</protein>
<reference key="1">
    <citation type="journal article" date="2009" name="J. Bacteriol.">
        <title>The complete genome sequence of Helicobacter pylori strain G27.</title>
        <authorList>
            <person name="Baltrus D.A."/>
            <person name="Amieva M.R."/>
            <person name="Covacci A."/>
            <person name="Lowe T.M."/>
            <person name="Merrell D.S."/>
            <person name="Ottemann K.M."/>
            <person name="Stein M."/>
            <person name="Salama N.R."/>
            <person name="Guillemin K."/>
        </authorList>
    </citation>
    <scope>NUCLEOTIDE SEQUENCE [LARGE SCALE GENOMIC DNA]</scope>
    <source>
        <strain>G27</strain>
    </source>
</reference>
<gene>
    <name evidence="1" type="primary">rpsH</name>
    <name type="ordered locus">HPG27_1254</name>
</gene>
<name>RS8_HELPG</name>
<keyword id="KW-1185">Reference proteome</keyword>
<keyword id="KW-0687">Ribonucleoprotein</keyword>
<keyword id="KW-0689">Ribosomal protein</keyword>
<keyword id="KW-0694">RNA-binding</keyword>
<keyword id="KW-0699">rRNA-binding</keyword>
<evidence type="ECO:0000255" key="1">
    <source>
        <dbReference type="HAMAP-Rule" id="MF_01302"/>
    </source>
</evidence>
<evidence type="ECO:0000305" key="2"/>
<proteinExistence type="inferred from homology"/>
<accession>B5Z8V3</accession>
<feature type="chain" id="PRO_1000140566" description="Small ribosomal subunit protein uS8">
    <location>
        <begin position="1"/>
        <end position="131"/>
    </location>
</feature>
<sequence>MVNDIIADSLTRLRNASMRRLEFTQLYYAKIVVSILEIFKEKGFIKDFNVKDKDKKQSVYVQLAYDEKGHSKISEVKRLSKPGRRVYKQKNELKRFKNGYGVIVVSTSKGVITNEEAYRQNVGGEVLCSIW</sequence>
<organism>
    <name type="scientific">Helicobacter pylori (strain G27)</name>
    <dbReference type="NCBI Taxonomy" id="563041"/>
    <lineage>
        <taxon>Bacteria</taxon>
        <taxon>Pseudomonadati</taxon>
        <taxon>Campylobacterota</taxon>
        <taxon>Epsilonproteobacteria</taxon>
        <taxon>Campylobacterales</taxon>
        <taxon>Helicobacteraceae</taxon>
        <taxon>Helicobacter</taxon>
    </lineage>
</organism>
<comment type="function">
    <text evidence="1">One of the primary rRNA binding proteins, it binds directly to 16S rRNA central domain where it helps coordinate assembly of the platform of the 30S subunit.</text>
</comment>
<comment type="subunit">
    <text evidence="1">Part of the 30S ribosomal subunit. Contacts proteins S5 and S12.</text>
</comment>
<comment type="similarity">
    <text evidence="1">Belongs to the universal ribosomal protein uS8 family.</text>
</comment>